<gene>
    <name type="primary">S7</name>
</gene>
<reference key="1">
    <citation type="submission" date="2004-10" db="EMBL/GenBank/DDBJ databases">
        <title>Sequencing and analysis of segments 2, 4 and 7 of Fiji disease virus provides the complete genome.</title>
        <authorList>
            <person name="Harding R.M."/>
            <person name="Burns P."/>
            <person name="Dale J.L."/>
        </authorList>
    </citation>
    <scope>NUCLEOTIDE SEQUENCE [GENOMIC RNA]</scope>
</reference>
<feature type="chain" id="PRO_0000403399" description="Uncharacterized protein VP7-2">
    <location>
        <begin position="1"/>
        <end position="307"/>
    </location>
</feature>
<dbReference type="EMBL" id="AY789927">
    <property type="protein sequence ID" value="AAX18652.1"/>
    <property type="molecule type" value="Genomic_RNA"/>
</dbReference>
<dbReference type="RefSeq" id="YP_249767.1">
    <property type="nucleotide sequence ID" value="NC_007163.1"/>
</dbReference>
<dbReference type="KEGG" id="vg:5130480"/>
<dbReference type="Proteomes" id="UP000001677">
    <property type="component" value="Genome"/>
</dbReference>
<dbReference type="InterPro" id="IPR009519">
    <property type="entry name" value="FDV_Vp7-2"/>
</dbReference>
<dbReference type="Pfam" id="PF06599">
    <property type="entry name" value="DUF1139"/>
    <property type="match status" value="1"/>
</dbReference>
<accession>Q4VPH7</accession>
<keyword id="KW-1185">Reference proteome</keyword>
<proteinExistence type="predicted"/>
<sequence>MEQNQNEEFLVYEFDQINVNADQQEVDLDDQSVVLSTYEFPSFYDMAVDAISKDFNSTHLIMEELDGVNVIYDIFDSEALEKWLDIDTYFELKPFPIERFELFNRLLLHQFQTLAYNRPRASWSTLRNQATQSVIEGFEDEFSDLPIQGMHNESWECLAPELRICFMFRSFKIKPSILLQVSRILAGSLMFPGLNLIGKKSLLDMFNNYNVIEYLDHYFPTSKYDSDEYLKFIRFDLVPDEWKLIVVKHEFENSFRFLNVHGKTEEKPYHKAMRGPPPDQWYTLLRRKFIFRSLKYTKRLIRNLLDY</sequence>
<organismHost>
    <name type="scientific">Saccharum officinarum</name>
    <name type="common">Sugarcane</name>
    <dbReference type="NCBI Taxonomy" id="4547"/>
</organismHost>
<name>VP72_FDVS</name>
<organism>
    <name type="scientific">Fiji disease virus (isolate Sugarcane)</name>
    <name type="common">FDV</name>
    <dbReference type="NCBI Taxonomy" id="648172"/>
    <lineage>
        <taxon>Viruses</taxon>
        <taxon>Riboviria</taxon>
        <taxon>Orthornavirae</taxon>
        <taxon>Duplornaviricota</taxon>
        <taxon>Resentoviricetes</taxon>
        <taxon>Reovirales</taxon>
        <taxon>Spinareoviridae</taxon>
        <taxon>Fijivirus</taxon>
        <taxon>Fiji disease virus</taxon>
    </lineage>
</organism>
<protein>
    <recommendedName>
        <fullName>Uncharacterized protein VP7-2</fullName>
    </recommendedName>
</protein>